<accession>A6TBC2</accession>
<name>HIS1_KLEP7</name>
<reference key="1">
    <citation type="submission" date="2006-09" db="EMBL/GenBank/DDBJ databases">
        <authorList>
            <consortium name="The Klebsiella pneumonia Genome Sequencing Project"/>
            <person name="McClelland M."/>
            <person name="Sanderson E.K."/>
            <person name="Spieth J."/>
            <person name="Clifton W.S."/>
            <person name="Latreille P."/>
            <person name="Sabo A."/>
            <person name="Pepin K."/>
            <person name="Bhonagiri V."/>
            <person name="Porwollik S."/>
            <person name="Ali J."/>
            <person name="Wilson R.K."/>
        </authorList>
    </citation>
    <scope>NUCLEOTIDE SEQUENCE [LARGE SCALE GENOMIC DNA]</scope>
    <source>
        <strain>ATCC 700721 / MGH 78578</strain>
    </source>
</reference>
<evidence type="ECO:0000255" key="1">
    <source>
        <dbReference type="HAMAP-Rule" id="MF_00079"/>
    </source>
</evidence>
<keyword id="KW-0028">Amino-acid biosynthesis</keyword>
<keyword id="KW-0067">ATP-binding</keyword>
<keyword id="KW-0963">Cytoplasm</keyword>
<keyword id="KW-0328">Glycosyltransferase</keyword>
<keyword id="KW-0368">Histidine biosynthesis</keyword>
<keyword id="KW-0460">Magnesium</keyword>
<keyword id="KW-0479">Metal-binding</keyword>
<keyword id="KW-0547">Nucleotide-binding</keyword>
<keyword id="KW-0808">Transferase</keyword>
<proteinExistence type="inferred from homology"/>
<protein>
    <recommendedName>
        <fullName evidence="1">ATP phosphoribosyltransferase</fullName>
        <shortName evidence="1">ATP-PRT</shortName>
        <shortName evidence="1">ATP-PRTase</shortName>
        <ecNumber evidence="1">2.4.2.17</ecNumber>
    </recommendedName>
</protein>
<comment type="function">
    <text evidence="1">Catalyzes the condensation of ATP and 5-phosphoribose 1-diphosphate to form N'-(5'-phosphoribosyl)-ATP (PR-ATP). Has a crucial role in the pathway because the rate of histidine biosynthesis seems to be controlled primarily by regulation of HisG enzymatic activity.</text>
</comment>
<comment type="catalytic activity">
    <reaction evidence="1">
        <text>1-(5-phospho-beta-D-ribosyl)-ATP + diphosphate = 5-phospho-alpha-D-ribose 1-diphosphate + ATP</text>
        <dbReference type="Rhea" id="RHEA:18473"/>
        <dbReference type="ChEBI" id="CHEBI:30616"/>
        <dbReference type="ChEBI" id="CHEBI:33019"/>
        <dbReference type="ChEBI" id="CHEBI:58017"/>
        <dbReference type="ChEBI" id="CHEBI:73183"/>
        <dbReference type="EC" id="2.4.2.17"/>
    </reaction>
</comment>
<comment type="cofactor">
    <cofactor evidence="1">
        <name>Mg(2+)</name>
        <dbReference type="ChEBI" id="CHEBI:18420"/>
    </cofactor>
</comment>
<comment type="activity regulation">
    <text evidence="1">Feedback inhibited by histidine.</text>
</comment>
<comment type="pathway">
    <text evidence="1">Amino-acid biosynthesis; L-histidine biosynthesis; L-histidine from 5-phospho-alpha-D-ribose 1-diphosphate: step 1/9.</text>
</comment>
<comment type="subunit">
    <text evidence="1">Equilibrium between an active dimeric form, an inactive hexameric form and higher aggregates. Interconversion between the various forms is largely reversible and is influenced by the natural substrates and inhibitors of the enzyme.</text>
</comment>
<comment type="subcellular location">
    <subcellularLocation>
        <location evidence="1">Cytoplasm</location>
    </subcellularLocation>
</comment>
<comment type="similarity">
    <text evidence="1">Belongs to the ATP phosphoribosyltransferase family. Long subfamily.</text>
</comment>
<dbReference type="EC" id="2.4.2.17" evidence="1"/>
<dbReference type="EMBL" id="CP000647">
    <property type="protein sequence ID" value="ABR77893.1"/>
    <property type="molecule type" value="Genomic_DNA"/>
</dbReference>
<dbReference type="RefSeq" id="WP_002912152.1">
    <property type="nucleotide sequence ID" value="NC_009648.1"/>
</dbReference>
<dbReference type="SMR" id="A6TBC2"/>
<dbReference type="STRING" id="272620.KPN_02475"/>
<dbReference type="PaxDb" id="272620-KPN_02475"/>
<dbReference type="EnsemblBacteria" id="ABR77893">
    <property type="protein sequence ID" value="ABR77893"/>
    <property type="gene ID" value="KPN_02475"/>
</dbReference>
<dbReference type="GeneID" id="93272293"/>
<dbReference type="KEGG" id="kpn:KPN_02475"/>
<dbReference type="HOGENOM" id="CLU_038115_1_0_6"/>
<dbReference type="UniPathway" id="UPA00031">
    <property type="reaction ID" value="UER00006"/>
</dbReference>
<dbReference type="Proteomes" id="UP000000265">
    <property type="component" value="Chromosome"/>
</dbReference>
<dbReference type="GO" id="GO:0005737">
    <property type="term" value="C:cytoplasm"/>
    <property type="evidence" value="ECO:0007669"/>
    <property type="project" value="UniProtKB-SubCell"/>
</dbReference>
<dbReference type="GO" id="GO:0005524">
    <property type="term" value="F:ATP binding"/>
    <property type="evidence" value="ECO:0007669"/>
    <property type="project" value="UniProtKB-KW"/>
</dbReference>
<dbReference type="GO" id="GO:0003879">
    <property type="term" value="F:ATP phosphoribosyltransferase activity"/>
    <property type="evidence" value="ECO:0007669"/>
    <property type="project" value="UniProtKB-UniRule"/>
</dbReference>
<dbReference type="GO" id="GO:0000287">
    <property type="term" value="F:magnesium ion binding"/>
    <property type="evidence" value="ECO:0007669"/>
    <property type="project" value="UniProtKB-UniRule"/>
</dbReference>
<dbReference type="GO" id="GO:0000105">
    <property type="term" value="P:L-histidine biosynthetic process"/>
    <property type="evidence" value="ECO:0007669"/>
    <property type="project" value="UniProtKB-UniRule"/>
</dbReference>
<dbReference type="CDD" id="cd13592">
    <property type="entry name" value="PBP2_HisGL2"/>
    <property type="match status" value="1"/>
</dbReference>
<dbReference type="FunFam" id="3.30.70.120:FF:000002">
    <property type="entry name" value="ATP phosphoribosyltransferase"/>
    <property type="match status" value="1"/>
</dbReference>
<dbReference type="FunFam" id="3.40.190.10:FF:000008">
    <property type="entry name" value="ATP phosphoribosyltransferase"/>
    <property type="match status" value="1"/>
</dbReference>
<dbReference type="Gene3D" id="3.30.70.120">
    <property type="match status" value="1"/>
</dbReference>
<dbReference type="Gene3D" id="3.40.190.10">
    <property type="entry name" value="Periplasmic binding protein-like II"/>
    <property type="match status" value="2"/>
</dbReference>
<dbReference type="HAMAP" id="MF_00079">
    <property type="entry name" value="HisG_Long"/>
    <property type="match status" value="1"/>
</dbReference>
<dbReference type="InterPro" id="IPR020621">
    <property type="entry name" value="ATP-PRT_HisG_long"/>
</dbReference>
<dbReference type="InterPro" id="IPR013820">
    <property type="entry name" value="ATP_PRibTrfase_cat"/>
</dbReference>
<dbReference type="InterPro" id="IPR018198">
    <property type="entry name" value="ATP_PRibTrfase_CS"/>
</dbReference>
<dbReference type="InterPro" id="IPR001348">
    <property type="entry name" value="ATP_PRibTrfase_HisG"/>
</dbReference>
<dbReference type="InterPro" id="IPR013115">
    <property type="entry name" value="HisG_C"/>
</dbReference>
<dbReference type="InterPro" id="IPR011322">
    <property type="entry name" value="N-reg_PII-like_a/b"/>
</dbReference>
<dbReference type="InterPro" id="IPR015867">
    <property type="entry name" value="N-reg_PII/ATP_PRibTrfase_C"/>
</dbReference>
<dbReference type="NCBIfam" id="TIGR00070">
    <property type="entry name" value="hisG"/>
    <property type="match status" value="1"/>
</dbReference>
<dbReference type="NCBIfam" id="TIGR03455">
    <property type="entry name" value="HisG_C-term"/>
    <property type="match status" value="1"/>
</dbReference>
<dbReference type="PANTHER" id="PTHR21403:SF8">
    <property type="entry name" value="ATP PHOSPHORIBOSYLTRANSFERASE"/>
    <property type="match status" value="1"/>
</dbReference>
<dbReference type="PANTHER" id="PTHR21403">
    <property type="entry name" value="ATP PHOSPHORIBOSYLTRANSFERASE ATP-PRTASE"/>
    <property type="match status" value="1"/>
</dbReference>
<dbReference type="Pfam" id="PF01634">
    <property type="entry name" value="HisG"/>
    <property type="match status" value="1"/>
</dbReference>
<dbReference type="Pfam" id="PF08029">
    <property type="entry name" value="HisG_C"/>
    <property type="match status" value="1"/>
</dbReference>
<dbReference type="SUPFAM" id="SSF54913">
    <property type="entry name" value="GlnB-like"/>
    <property type="match status" value="1"/>
</dbReference>
<dbReference type="SUPFAM" id="SSF53850">
    <property type="entry name" value="Periplasmic binding protein-like II"/>
    <property type="match status" value="1"/>
</dbReference>
<dbReference type="PROSITE" id="PS01316">
    <property type="entry name" value="ATP_P_PHORIBOSYLTR"/>
    <property type="match status" value="1"/>
</dbReference>
<gene>
    <name evidence="1" type="primary">hisG</name>
    <name type="ordered locus">KPN78578_24320</name>
    <name type="ORF">KPN_02475</name>
</gene>
<feature type="chain" id="PRO_1000004467" description="ATP phosphoribosyltransferase">
    <location>
        <begin position="1"/>
        <end position="299"/>
    </location>
</feature>
<sequence>MLDNTRLRIAIQKSGRLSEDSRELLSRCGIKVNLHTQRLIALAENMPIDILRVRDDDIPGLVMDGVVDLGIIGENVLEEELLSRRAQGEDPRYFTLRRLDFGGCRLSLATPVDEAWNGPAALDGKRIATSYPHLLKRYLDQKGISFKSCLLNGSVEVAPRAGLADAICDLVSTGATLEANGLREVEVIYRSKACLIQRDGEMADAKQQLIDRLLTRIQGVIQARESKYIMMHAPTERLEEVVALLPGAERPTILPLAGDKQRVAMHMVSSETLFWETMEKLKALGASSILVLPIEKMME</sequence>
<organism>
    <name type="scientific">Klebsiella pneumoniae subsp. pneumoniae (strain ATCC 700721 / MGH 78578)</name>
    <dbReference type="NCBI Taxonomy" id="272620"/>
    <lineage>
        <taxon>Bacteria</taxon>
        <taxon>Pseudomonadati</taxon>
        <taxon>Pseudomonadota</taxon>
        <taxon>Gammaproteobacteria</taxon>
        <taxon>Enterobacterales</taxon>
        <taxon>Enterobacteriaceae</taxon>
        <taxon>Klebsiella/Raoultella group</taxon>
        <taxon>Klebsiella</taxon>
        <taxon>Klebsiella pneumoniae complex</taxon>
    </lineage>
</organism>